<name>RS19_TOLAT</name>
<evidence type="ECO:0000255" key="1">
    <source>
        <dbReference type="HAMAP-Rule" id="MF_00531"/>
    </source>
</evidence>
<evidence type="ECO:0000305" key="2"/>
<organism>
    <name type="scientific">Tolumonas auensis (strain DSM 9187 / NBRC 110442 / TA 4)</name>
    <dbReference type="NCBI Taxonomy" id="595494"/>
    <lineage>
        <taxon>Bacteria</taxon>
        <taxon>Pseudomonadati</taxon>
        <taxon>Pseudomonadota</taxon>
        <taxon>Gammaproteobacteria</taxon>
        <taxon>Aeromonadales</taxon>
        <taxon>Aeromonadaceae</taxon>
        <taxon>Tolumonas</taxon>
    </lineage>
</organism>
<feature type="chain" id="PRO_1000211823" description="Small ribosomal subunit protein uS19">
    <location>
        <begin position="1"/>
        <end position="92"/>
    </location>
</feature>
<keyword id="KW-1185">Reference proteome</keyword>
<keyword id="KW-0687">Ribonucleoprotein</keyword>
<keyword id="KW-0689">Ribosomal protein</keyword>
<keyword id="KW-0694">RNA-binding</keyword>
<keyword id="KW-0699">rRNA-binding</keyword>
<sequence>MPRSLKKGPFIDLHLLKKVEKAVESADKKPIKTWSRRSMIIPDMIGLTIAVHNGRQHVPVYVSDEMVGHKLGEFAPTRTYRGHAADKKAKKK</sequence>
<protein>
    <recommendedName>
        <fullName evidence="1">Small ribosomal subunit protein uS19</fullName>
    </recommendedName>
    <alternativeName>
        <fullName evidence="2">30S ribosomal protein S19</fullName>
    </alternativeName>
</protein>
<comment type="function">
    <text evidence="1">Protein S19 forms a complex with S13 that binds strongly to the 16S ribosomal RNA.</text>
</comment>
<comment type="similarity">
    <text evidence="1">Belongs to the universal ribosomal protein uS19 family.</text>
</comment>
<gene>
    <name evidence="1" type="primary">rpsS</name>
    <name type="ordered locus">Tola_0103</name>
</gene>
<accession>C4L7T4</accession>
<reference key="1">
    <citation type="submission" date="2009-05" db="EMBL/GenBank/DDBJ databases">
        <title>Complete sequence of Tolumonas auensis DSM 9187.</title>
        <authorList>
            <consortium name="US DOE Joint Genome Institute"/>
            <person name="Lucas S."/>
            <person name="Copeland A."/>
            <person name="Lapidus A."/>
            <person name="Glavina del Rio T."/>
            <person name="Tice H."/>
            <person name="Bruce D."/>
            <person name="Goodwin L."/>
            <person name="Pitluck S."/>
            <person name="Chertkov O."/>
            <person name="Brettin T."/>
            <person name="Detter J.C."/>
            <person name="Han C."/>
            <person name="Larimer F."/>
            <person name="Land M."/>
            <person name="Hauser L."/>
            <person name="Kyrpides N."/>
            <person name="Mikhailova N."/>
            <person name="Spring S."/>
            <person name="Beller H."/>
        </authorList>
    </citation>
    <scope>NUCLEOTIDE SEQUENCE [LARGE SCALE GENOMIC DNA]</scope>
    <source>
        <strain>DSM 9187 / NBRC 110442 / TA 4</strain>
    </source>
</reference>
<proteinExistence type="inferred from homology"/>
<dbReference type="EMBL" id="CP001616">
    <property type="protein sequence ID" value="ACQ91733.1"/>
    <property type="molecule type" value="Genomic_DNA"/>
</dbReference>
<dbReference type="RefSeq" id="WP_012728332.1">
    <property type="nucleotide sequence ID" value="NC_012691.1"/>
</dbReference>
<dbReference type="SMR" id="C4L7T4"/>
<dbReference type="STRING" id="595494.Tola_0103"/>
<dbReference type="KEGG" id="tau:Tola_0103"/>
<dbReference type="eggNOG" id="COG0185">
    <property type="taxonomic scope" value="Bacteria"/>
</dbReference>
<dbReference type="HOGENOM" id="CLU_144911_0_1_6"/>
<dbReference type="OrthoDB" id="9797833at2"/>
<dbReference type="Proteomes" id="UP000009073">
    <property type="component" value="Chromosome"/>
</dbReference>
<dbReference type="GO" id="GO:0005737">
    <property type="term" value="C:cytoplasm"/>
    <property type="evidence" value="ECO:0007669"/>
    <property type="project" value="UniProtKB-ARBA"/>
</dbReference>
<dbReference type="GO" id="GO:0015935">
    <property type="term" value="C:small ribosomal subunit"/>
    <property type="evidence" value="ECO:0007669"/>
    <property type="project" value="InterPro"/>
</dbReference>
<dbReference type="GO" id="GO:0019843">
    <property type="term" value="F:rRNA binding"/>
    <property type="evidence" value="ECO:0007669"/>
    <property type="project" value="UniProtKB-UniRule"/>
</dbReference>
<dbReference type="GO" id="GO:0003735">
    <property type="term" value="F:structural constituent of ribosome"/>
    <property type="evidence" value="ECO:0007669"/>
    <property type="project" value="InterPro"/>
</dbReference>
<dbReference type="GO" id="GO:0000028">
    <property type="term" value="P:ribosomal small subunit assembly"/>
    <property type="evidence" value="ECO:0007669"/>
    <property type="project" value="TreeGrafter"/>
</dbReference>
<dbReference type="GO" id="GO:0006412">
    <property type="term" value="P:translation"/>
    <property type="evidence" value="ECO:0007669"/>
    <property type="project" value="UniProtKB-UniRule"/>
</dbReference>
<dbReference type="FunFam" id="3.30.860.10:FF:000001">
    <property type="entry name" value="30S ribosomal protein S19"/>
    <property type="match status" value="1"/>
</dbReference>
<dbReference type="Gene3D" id="3.30.860.10">
    <property type="entry name" value="30s Ribosomal Protein S19, Chain A"/>
    <property type="match status" value="1"/>
</dbReference>
<dbReference type="HAMAP" id="MF_00531">
    <property type="entry name" value="Ribosomal_uS19"/>
    <property type="match status" value="1"/>
</dbReference>
<dbReference type="InterPro" id="IPR002222">
    <property type="entry name" value="Ribosomal_uS19"/>
</dbReference>
<dbReference type="InterPro" id="IPR005732">
    <property type="entry name" value="Ribosomal_uS19_bac-type"/>
</dbReference>
<dbReference type="InterPro" id="IPR020934">
    <property type="entry name" value="Ribosomal_uS19_CS"/>
</dbReference>
<dbReference type="InterPro" id="IPR023575">
    <property type="entry name" value="Ribosomal_uS19_SF"/>
</dbReference>
<dbReference type="NCBIfam" id="TIGR01050">
    <property type="entry name" value="rpsS_bact"/>
    <property type="match status" value="1"/>
</dbReference>
<dbReference type="PANTHER" id="PTHR11880">
    <property type="entry name" value="RIBOSOMAL PROTEIN S19P FAMILY MEMBER"/>
    <property type="match status" value="1"/>
</dbReference>
<dbReference type="PANTHER" id="PTHR11880:SF8">
    <property type="entry name" value="SMALL RIBOSOMAL SUBUNIT PROTEIN US19M"/>
    <property type="match status" value="1"/>
</dbReference>
<dbReference type="Pfam" id="PF00203">
    <property type="entry name" value="Ribosomal_S19"/>
    <property type="match status" value="1"/>
</dbReference>
<dbReference type="PIRSF" id="PIRSF002144">
    <property type="entry name" value="Ribosomal_S19"/>
    <property type="match status" value="1"/>
</dbReference>
<dbReference type="PRINTS" id="PR00975">
    <property type="entry name" value="RIBOSOMALS19"/>
</dbReference>
<dbReference type="SUPFAM" id="SSF54570">
    <property type="entry name" value="Ribosomal protein S19"/>
    <property type="match status" value="1"/>
</dbReference>
<dbReference type="PROSITE" id="PS00323">
    <property type="entry name" value="RIBOSOMAL_S19"/>
    <property type="match status" value="1"/>
</dbReference>